<gene>
    <name evidence="4" type="primary">suhB</name>
    <name evidence="3" type="synonym">yktC</name>
    <name type="ordered locus">BSU14670</name>
</gene>
<organism>
    <name type="scientific">Bacillus subtilis (strain 168)</name>
    <dbReference type="NCBI Taxonomy" id="224308"/>
    <lineage>
        <taxon>Bacteria</taxon>
        <taxon>Bacillati</taxon>
        <taxon>Bacillota</taxon>
        <taxon>Bacilli</taxon>
        <taxon>Bacillales</taxon>
        <taxon>Bacillaceae</taxon>
        <taxon>Bacillus</taxon>
    </lineage>
</organism>
<evidence type="ECO:0000250" key="1"/>
<evidence type="ECO:0000269" key="2">
    <source>
    </source>
</evidence>
<evidence type="ECO:0000303" key="3">
    <source>
    </source>
</evidence>
<evidence type="ECO:0000305" key="4"/>
<protein>
    <recommendedName>
        <fullName evidence="3">Inositol-1-monophosphatase</fullName>
        <shortName>I-1-Pase</shortName>
        <shortName>IMPase</shortName>
        <shortName>Inositol-1-phosphatase</shortName>
        <ecNumber evidence="2">3.1.3.25</ecNumber>
        <ecNumber evidence="2">3.1.3.5</ecNumber>
    </recommendedName>
</protein>
<accession>Q45499</accession>
<reference key="1">
    <citation type="journal article" date="1996" name="Microbiology">
        <title>The ampS-nprE (124 degrees-127 degrees) region of the Bacillus subtilis 168 chromosome: sequencing of a 27 kb segment and identification of several genes in the area.</title>
        <authorList>
            <person name="Winters P."/>
            <person name="Caldwell R.M."/>
            <person name="Enfield L."/>
            <person name="Ferrari E."/>
        </authorList>
    </citation>
    <scope>NUCLEOTIDE SEQUENCE [GENOMIC DNA]</scope>
    <source>
        <strain>168</strain>
    </source>
</reference>
<reference key="2">
    <citation type="submission" date="1997-07" db="EMBL/GenBank/DDBJ databases">
        <title>Sequence analysis of the mobA-ampS region of the Bacillus subtilis chromosome.</title>
        <authorList>
            <person name="Caldwell R.M."/>
            <person name="Ferrari E."/>
        </authorList>
    </citation>
    <scope>NUCLEOTIDE SEQUENCE [GENOMIC DNA]</scope>
    <source>
        <strain>168</strain>
    </source>
</reference>
<reference key="3">
    <citation type="journal article" date="1997" name="Nature">
        <title>The complete genome sequence of the Gram-positive bacterium Bacillus subtilis.</title>
        <authorList>
            <person name="Kunst F."/>
            <person name="Ogasawara N."/>
            <person name="Moszer I."/>
            <person name="Albertini A.M."/>
            <person name="Alloni G."/>
            <person name="Azevedo V."/>
            <person name="Bertero M.G."/>
            <person name="Bessieres P."/>
            <person name="Bolotin A."/>
            <person name="Borchert S."/>
            <person name="Borriss R."/>
            <person name="Boursier L."/>
            <person name="Brans A."/>
            <person name="Braun M."/>
            <person name="Brignell S.C."/>
            <person name="Bron S."/>
            <person name="Brouillet S."/>
            <person name="Bruschi C.V."/>
            <person name="Caldwell B."/>
            <person name="Capuano V."/>
            <person name="Carter N.M."/>
            <person name="Choi S.-K."/>
            <person name="Codani J.-J."/>
            <person name="Connerton I.F."/>
            <person name="Cummings N.J."/>
            <person name="Daniel R.A."/>
            <person name="Denizot F."/>
            <person name="Devine K.M."/>
            <person name="Duesterhoeft A."/>
            <person name="Ehrlich S.D."/>
            <person name="Emmerson P.T."/>
            <person name="Entian K.-D."/>
            <person name="Errington J."/>
            <person name="Fabret C."/>
            <person name="Ferrari E."/>
            <person name="Foulger D."/>
            <person name="Fritz C."/>
            <person name="Fujita M."/>
            <person name="Fujita Y."/>
            <person name="Fuma S."/>
            <person name="Galizzi A."/>
            <person name="Galleron N."/>
            <person name="Ghim S.-Y."/>
            <person name="Glaser P."/>
            <person name="Goffeau A."/>
            <person name="Golightly E.J."/>
            <person name="Grandi G."/>
            <person name="Guiseppi G."/>
            <person name="Guy B.J."/>
            <person name="Haga K."/>
            <person name="Haiech J."/>
            <person name="Harwood C.R."/>
            <person name="Henaut A."/>
            <person name="Hilbert H."/>
            <person name="Holsappel S."/>
            <person name="Hosono S."/>
            <person name="Hullo M.-F."/>
            <person name="Itaya M."/>
            <person name="Jones L.-M."/>
            <person name="Joris B."/>
            <person name="Karamata D."/>
            <person name="Kasahara Y."/>
            <person name="Klaerr-Blanchard M."/>
            <person name="Klein C."/>
            <person name="Kobayashi Y."/>
            <person name="Koetter P."/>
            <person name="Koningstein G."/>
            <person name="Krogh S."/>
            <person name="Kumano M."/>
            <person name="Kurita K."/>
            <person name="Lapidus A."/>
            <person name="Lardinois S."/>
            <person name="Lauber J."/>
            <person name="Lazarevic V."/>
            <person name="Lee S.-M."/>
            <person name="Levine A."/>
            <person name="Liu H."/>
            <person name="Masuda S."/>
            <person name="Mauel C."/>
            <person name="Medigue C."/>
            <person name="Medina N."/>
            <person name="Mellado R.P."/>
            <person name="Mizuno M."/>
            <person name="Moestl D."/>
            <person name="Nakai S."/>
            <person name="Noback M."/>
            <person name="Noone D."/>
            <person name="O'Reilly M."/>
            <person name="Ogawa K."/>
            <person name="Ogiwara A."/>
            <person name="Oudega B."/>
            <person name="Park S.-H."/>
            <person name="Parro V."/>
            <person name="Pohl T.M."/>
            <person name="Portetelle D."/>
            <person name="Porwollik S."/>
            <person name="Prescott A.M."/>
            <person name="Presecan E."/>
            <person name="Pujic P."/>
            <person name="Purnelle B."/>
            <person name="Rapoport G."/>
            <person name="Rey M."/>
            <person name="Reynolds S."/>
            <person name="Rieger M."/>
            <person name="Rivolta C."/>
            <person name="Rocha E."/>
            <person name="Roche B."/>
            <person name="Rose M."/>
            <person name="Sadaie Y."/>
            <person name="Sato T."/>
            <person name="Scanlan E."/>
            <person name="Schleich S."/>
            <person name="Schroeter R."/>
            <person name="Scoffone F."/>
            <person name="Sekiguchi J."/>
            <person name="Sekowska A."/>
            <person name="Seror S.J."/>
            <person name="Serror P."/>
            <person name="Shin B.-S."/>
            <person name="Soldo B."/>
            <person name="Sorokin A."/>
            <person name="Tacconi E."/>
            <person name="Takagi T."/>
            <person name="Takahashi H."/>
            <person name="Takemaru K."/>
            <person name="Takeuchi M."/>
            <person name="Tamakoshi A."/>
            <person name="Tanaka T."/>
            <person name="Terpstra P."/>
            <person name="Tognoni A."/>
            <person name="Tosato V."/>
            <person name="Uchiyama S."/>
            <person name="Vandenbol M."/>
            <person name="Vannier F."/>
            <person name="Vassarotti A."/>
            <person name="Viari A."/>
            <person name="Wambutt R."/>
            <person name="Wedler E."/>
            <person name="Wedler H."/>
            <person name="Weitzenegger T."/>
            <person name="Winters P."/>
            <person name="Wipat A."/>
            <person name="Yamamoto H."/>
            <person name="Yamane K."/>
            <person name="Yasumoto K."/>
            <person name="Yata K."/>
            <person name="Yoshida K."/>
            <person name="Yoshikawa H.-F."/>
            <person name="Zumstein E."/>
            <person name="Yoshikawa H."/>
            <person name="Danchin A."/>
        </authorList>
    </citation>
    <scope>NUCLEOTIDE SEQUENCE [LARGE SCALE GENOMIC DNA]</scope>
    <source>
        <strain>168</strain>
    </source>
</reference>
<reference key="4">
    <citation type="journal article" date="2016" name="BMC Microbiol.">
        <title>Bacillus subtilis 5'-nucleotidases with various functions and substrate specificities.</title>
        <authorList>
            <person name="Terakawa A."/>
            <person name="Natsume A."/>
            <person name="Okada A."/>
            <person name="Nishihata S."/>
            <person name="Kuse J."/>
            <person name="Tanaka K."/>
            <person name="Takenaka S."/>
            <person name="Ishikawa S."/>
            <person name="Yoshida K.I."/>
        </authorList>
    </citation>
    <scope>FUNCTION</scope>
    <scope>BIOPHYSICOCHEMICAL PROPERTIES</scope>
    <scope>DISRUPTION PHENOTYPE</scope>
    <source>
        <strain>168</strain>
    </source>
</reference>
<feature type="chain" id="PRO_0000142554" description="Inositol-1-monophosphatase">
    <location>
        <begin position="1"/>
        <end position="265"/>
    </location>
</feature>
<feature type="binding site" evidence="1">
    <location>
        <position position="69"/>
    </location>
    <ligand>
        <name>Mg(2+)</name>
        <dbReference type="ChEBI" id="CHEBI:18420"/>
        <label>1</label>
    </ligand>
</feature>
<feature type="binding site" evidence="1">
    <location>
        <position position="69"/>
    </location>
    <ligand>
        <name>substrate</name>
    </ligand>
</feature>
<feature type="binding site" evidence="1">
    <location>
        <position position="87"/>
    </location>
    <ligand>
        <name>Mg(2+)</name>
        <dbReference type="ChEBI" id="CHEBI:18420"/>
        <label>1</label>
    </ligand>
</feature>
<feature type="binding site" evidence="1">
    <location>
        <position position="87"/>
    </location>
    <ligand>
        <name>Mg(2+)</name>
        <dbReference type="ChEBI" id="CHEBI:18420"/>
        <label>2</label>
    </ligand>
</feature>
<feature type="binding site" evidence="1">
    <location>
        <begin position="89"/>
        <end position="92"/>
    </location>
    <ligand>
        <name>substrate</name>
    </ligand>
</feature>
<feature type="binding site" evidence="1">
    <location>
        <position position="89"/>
    </location>
    <ligand>
        <name>Mg(2+)</name>
        <dbReference type="ChEBI" id="CHEBI:18420"/>
        <label>1</label>
    </ligand>
</feature>
<feature type="binding site" evidence="1">
    <location>
        <position position="90"/>
    </location>
    <ligand>
        <name>Mg(2+)</name>
        <dbReference type="ChEBI" id="CHEBI:18420"/>
        <label>2</label>
    </ligand>
</feature>
<feature type="binding site" evidence="1">
    <location>
        <position position="185"/>
    </location>
    <ligand>
        <name>substrate</name>
    </ligand>
</feature>
<feature type="binding site" evidence="1">
    <location>
        <position position="214"/>
    </location>
    <ligand>
        <name>Mg(2+)</name>
        <dbReference type="ChEBI" id="CHEBI:18420"/>
        <label>2</label>
    </ligand>
</feature>
<feature type="binding site" evidence="1">
    <location>
        <position position="214"/>
    </location>
    <ligand>
        <name>substrate</name>
    </ligand>
</feature>
<comment type="function">
    <text evidence="2">Hydrolyzes myo-inositol monophosphate. Catalyzes the dephosphorylation of GMP and IMP.</text>
</comment>
<comment type="catalytic activity">
    <reaction evidence="2">
        <text>a myo-inositol phosphate + H2O = myo-inositol + phosphate</text>
        <dbReference type="Rhea" id="RHEA:24056"/>
        <dbReference type="ChEBI" id="CHEBI:15377"/>
        <dbReference type="ChEBI" id="CHEBI:17268"/>
        <dbReference type="ChEBI" id="CHEBI:43474"/>
        <dbReference type="ChEBI" id="CHEBI:84139"/>
        <dbReference type="EC" id="3.1.3.25"/>
    </reaction>
</comment>
<comment type="catalytic activity">
    <reaction evidence="2">
        <text>a ribonucleoside 5'-phosphate + H2O = a ribonucleoside + phosphate</text>
        <dbReference type="Rhea" id="RHEA:12484"/>
        <dbReference type="ChEBI" id="CHEBI:15377"/>
        <dbReference type="ChEBI" id="CHEBI:18254"/>
        <dbReference type="ChEBI" id="CHEBI:43474"/>
        <dbReference type="ChEBI" id="CHEBI:58043"/>
        <dbReference type="EC" id="3.1.3.5"/>
    </reaction>
</comment>
<comment type="cofactor">
    <cofactor evidence="1">
        <name>Mg(2+)</name>
        <dbReference type="ChEBI" id="CHEBI:18420"/>
    </cofactor>
</comment>
<comment type="biophysicochemical properties">
    <kinetics>
        <KM evidence="2">76 uM for myo-inositol phosphate</KM>
        <KM evidence="2">490 uM for beta-glycerophosphate</KM>
        <KM evidence="2">1100 uM for IMP</KM>
        <KM evidence="2">1900 uM for GMP</KM>
        <Vmax evidence="2">0.82 umol/min/mg enzyme for myo-inositol phosphate</Vmax>
        <Vmax evidence="2">1.2 umol/min/mg enzyme for beta-glycerophosphate</Vmax>
        <Vmax evidence="2">0.78 umol/min/mg enzyme for IMP</Vmax>
        <Vmax evidence="2">0.169 umol/min/mg enzyme for GMP</Vmax>
    </kinetics>
</comment>
<comment type="disruption phenotype">
    <text evidence="2">No visible phenotype during 5 hours of growth, decreased resistance to oxidative stress caused by diamide.</text>
</comment>
<comment type="similarity">
    <text evidence="4">Belongs to the inositol monophosphatase superfamily.</text>
</comment>
<name>SUHB_BACSU</name>
<proteinExistence type="evidence at protein level"/>
<sequence>MTNWTEIDEIAKKWIREAGARITQSMHESLTIETKSNPNDLVTNIDKETEKFFIDRIQETFPGHRILGEEGQGDKIHSLEGVVWIIDPIDGTMNFVHQQRNFAISIGIFENGEGKIGLIYDVVHDELYHAFSGRGAYMNETKLAPLKETVIEEAILAINATWVTENRRIDQSVLAPLVKRVRGTRSYGSAALELANVAAGRIDAYITMRLAPWDYAAGCVLLNEVGGTYTTIEGEPFTFLENHSVLAGNPSIHKTIFEEYLHARK</sequence>
<dbReference type="EC" id="3.1.3.25" evidence="2"/>
<dbReference type="EC" id="3.1.3.5" evidence="2"/>
<dbReference type="EMBL" id="AF012285">
    <property type="protein sequence ID" value="AAC24940.1"/>
    <property type="molecule type" value="Genomic_DNA"/>
</dbReference>
<dbReference type="EMBL" id="AL009126">
    <property type="protein sequence ID" value="CAB13340.1"/>
    <property type="molecule type" value="Genomic_DNA"/>
</dbReference>
<dbReference type="PIR" id="E69864">
    <property type="entry name" value="E69864"/>
</dbReference>
<dbReference type="RefSeq" id="NP_389350.1">
    <property type="nucleotide sequence ID" value="NC_000964.3"/>
</dbReference>
<dbReference type="RefSeq" id="WP_003232297.1">
    <property type="nucleotide sequence ID" value="NZ_OZ025638.1"/>
</dbReference>
<dbReference type="SMR" id="Q45499"/>
<dbReference type="FunCoup" id="Q45499">
    <property type="interactions" value="514"/>
</dbReference>
<dbReference type="STRING" id="224308.BSU14670"/>
<dbReference type="PaxDb" id="224308-BSU14670"/>
<dbReference type="EnsemblBacteria" id="CAB13340">
    <property type="protein sequence ID" value="CAB13340"/>
    <property type="gene ID" value="BSU_14670"/>
</dbReference>
<dbReference type="GeneID" id="935986"/>
<dbReference type="KEGG" id="bsu:BSU14670"/>
<dbReference type="PATRIC" id="fig|224308.179.peg.1600"/>
<dbReference type="eggNOG" id="COG0483">
    <property type="taxonomic scope" value="Bacteria"/>
</dbReference>
<dbReference type="InParanoid" id="Q45499"/>
<dbReference type="OrthoDB" id="9772456at2"/>
<dbReference type="PhylomeDB" id="Q45499"/>
<dbReference type="BioCyc" id="BSUB:BSU14670-MONOMER"/>
<dbReference type="Proteomes" id="UP000001570">
    <property type="component" value="Chromosome"/>
</dbReference>
<dbReference type="GO" id="GO:0008253">
    <property type="term" value="F:5'-nucleotidase activity"/>
    <property type="evidence" value="ECO:0007669"/>
    <property type="project" value="UniProtKB-EC"/>
</dbReference>
<dbReference type="GO" id="GO:0008934">
    <property type="term" value="F:inositol monophosphate 1-phosphatase activity"/>
    <property type="evidence" value="ECO:0000318"/>
    <property type="project" value="GO_Central"/>
</dbReference>
<dbReference type="GO" id="GO:0046872">
    <property type="term" value="F:metal ion binding"/>
    <property type="evidence" value="ECO:0007669"/>
    <property type="project" value="UniProtKB-KW"/>
</dbReference>
<dbReference type="GO" id="GO:0006020">
    <property type="term" value="P:inositol metabolic process"/>
    <property type="evidence" value="ECO:0000318"/>
    <property type="project" value="GO_Central"/>
</dbReference>
<dbReference type="GO" id="GO:0046854">
    <property type="term" value="P:phosphatidylinositol phosphate biosynthetic process"/>
    <property type="evidence" value="ECO:0007669"/>
    <property type="project" value="InterPro"/>
</dbReference>
<dbReference type="GO" id="GO:0007165">
    <property type="term" value="P:signal transduction"/>
    <property type="evidence" value="ECO:0000318"/>
    <property type="project" value="GO_Central"/>
</dbReference>
<dbReference type="CDD" id="cd01637">
    <property type="entry name" value="IMPase_like"/>
    <property type="match status" value="1"/>
</dbReference>
<dbReference type="FunFam" id="3.30.540.10:FF:000003">
    <property type="entry name" value="Inositol-1-monophosphatase"/>
    <property type="match status" value="1"/>
</dbReference>
<dbReference type="Gene3D" id="3.40.190.80">
    <property type="match status" value="1"/>
</dbReference>
<dbReference type="Gene3D" id="3.30.540.10">
    <property type="entry name" value="Fructose-1,6-Bisphosphatase, subunit A, domain 1"/>
    <property type="match status" value="1"/>
</dbReference>
<dbReference type="InterPro" id="IPR020583">
    <property type="entry name" value="Inositol_monoP_metal-BS"/>
</dbReference>
<dbReference type="InterPro" id="IPR000760">
    <property type="entry name" value="Inositol_monophosphatase-like"/>
</dbReference>
<dbReference type="InterPro" id="IPR020550">
    <property type="entry name" value="Inositol_monophosphatase_CS"/>
</dbReference>
<dbReference type="PANTHER" id="PTHR20854">
    <property type="entry name" value="INOSITOL MONOPHOSPHATASE"/>
    <property type="match status" value="1"/>
</dbReference>
<dbReference type="PANTHER" id="PTHR20854:SF4">
    <property type="entry name" value="INOSITOL-1-MONOPHOSPHATASE-RELATED"/>
    <property type="match status" value="1"/>
</dbReference>
<dbReference type="Pfam" id="PF00459">
    <property type="entry name" value="Inositol_P"/>
    <property type="match status" value="1"/>
</dbReference>
<dbReference type="PRINTS" id="PR00377">
    <property type="entry name" value="IMPHPHTASES"/>
</dbReference>
<dbReference type="SUPFAM" id="SSF56655">
    <property type="entry name" value="Carbohydrate phosphatase"/>
    <property type="match status" value="1"/>
</dbReference>
<dbReference type="PROSITE" id="PS00629">
    <property type="entry name" value="IMP_1"/>
    <property type="match status" value="1"/>
</dbReference>
<dbReference type="PROSITE" id="PS00630">
    <property type="entry name" value="IMP_2"/>
    <property type="match status" value="1"/>
</dbReference>
<keyword id="KW-0378">Hydrolase</keyword>
<keyword id="KW-0460">Magnesium</keyword>
<keyword id="KW-0479">Metal-binding</keyword>
<keyword id="KW-1185">Reference proteome</keyword>